<keyword id="KW-1003">Cell membrane</keyword>
<keyword id="KW-0350">Heme biosynthesis</keyword>
<keyword id="KW-0408">Iron</keyword>
<keyword id="KW-0472">Membrane</keyword>
<keyword id="KW-0479">Metal-binding</keyword>
<keyword id="KW-0560">Oxidoreductase</keyword>
<keyword id="KW-0812">Transmembrane</keyword>
<keyword id="KW-1133">Transmembrane helix</keyword>
<sequence length="382" mass="40347">MRLSTHPTLDRFDAVPAASYRPGHGAVRAWLYLLAVLVVAMVAVGGATRLTGSGLSITEWRPVTGVVPPLDAADWAVEFDKYRDTPQYRILNQGIGLDGFKTLYWWEWGHRLLGRIVGLVFFLPFAWFWARGMLGRRLLLGLLGLGLLGGLQGAIGWIMVASGLQPGMTAVAPLKLALHLTTASLILAGLVWLAAGTRPRALAPAPEPVRVVAGLLPALVLVQIWLGGLVAGSKAGLLYNTWPDMDGVLVPPARVLFDKVPFIENFIDNLALVQFNHRLFAYLVVVVAIAHAIQAARTASGSAAAGRAMGLAALATAQMGLGIATLLLHVPLWAGLAHQVFAMAVLIMATVHARLARGVPAATAPTGAEVPIGLEALAGRGA</sequence>
<protein>
    <recommendedName>
        <fullName evidence="1">Heme A synthase</fullName>
        <shortName evidence="1">HAS</shortName>
        <ecNumber evidence="1">1.17.99.9</ecNumber>
    </recommendedName>
    <alternativeName>
        <fullName evidence="1">Cytochrome aa3-controlling protein</fullName>
    </alternativeName>
</protein>
<accession>A9W350</accession>
<reference key="1">
    <citation type="submission" date="2007-12" db="EMBL/GenBank/DDBJ databases">
        <title>Complete sequence of Methylobacterium extorquens PA1.</title>
        <authorList>
            <consortium name="US DOE Joint Genome Institute"/>
            <person name="Copeland A."/>
            <person name="Lucas S."/>
            <person name="Lapidus A."/>
            <person name="Barry K."/>
            <person name="Glavina del Rio T."/>
            <person name="Dalin E."/>
            <person name="Tice H."/>
            <person name="Pitluck S."/>
            <person name="Saunders E."/>
            <person name="Brettin T."/>
            <person name="Bruce D."/>
            <person name="Detter J.C."/>
            <person name="Han C."/>
            <person name="Schmutz J."/>
            <person name="Larimer F."/>
            <person name="Land M."/>
            <person name="Hauser L."/>
            <person name="Kyrpides N."/>
            <person name="Kim E."/>
            <person name="Marx C."/>
            <person name="Richardson P."/>
        </authorList>
    </citation>
    <scope>NUCLEOTIDE SEQUENCE [LARGE SCALE GENOMIC DNA]</scope>
    <source>
        <strain>PA1</strain>
    </source>
</reference>
<dbReference type="EC" id="1.17.99.9" evidence="1"/>
<dbReference type="EMBL" id="CP000908">
    <property type="protein sequence ID" value="ABY30006.1"/>
    <property type="molecule type" value="Genomic_DNA"/>
</dbReference>
<dbReference type="RefSeq" id="WP_012253204.1">
    <property type="nucleotide sequence ID" value="NC_010172.1"/>
</dbReference>
<dbReference type="SMR" id="A9W350"/>
<dbReference type="KEGG" id="mex:Mext_1607"/>
<dbReference type="eggNOG" id="COG1612">
    <property type="taxonomic scope" value="Bacteria"/>
</dbReference>
<dbReference type="HOGENOM" id="CLU_017627_0_0_5"/>
<dbReference type="BioCyc" id="MEXT419610:MEXT_RS08160-MONOMER"/>
<dbReference type="UniPathway" id="UPA00269">
    <property type="reaction ID" value="UER00713"/>
</dbReference>
<dbReference type="GO" id="GO:0005886">
    <property type="term" value="C:plasma membrane"/>
    <property type="evidence" value="ECO:0007669"/>
    <property type="project" value="UniProtKB-SubCell"/>
</dbReference>
<dbReference type="GO" id="GO:0046872">
    <property type="term" value="F:metal ion binding"/>
    <property type="evidence" value="ECO:0007669"/>
    <property type="project" value="UniProtKB-KW"/>
</dbReference>
<dbReference type="GO" id="GO:0016653">
    <property type="term" value="F:oxidoreductase activity, acting on NAD(P)H, heme protein as acceptor"/>
    <property type="evidence" value="ECO:0007669"/>
    <property type="project" value="InterPro"/>
</dbReference>
<dbReference type="GO" id="GO:0006784">
    <property type="term" value="P:heme A biosynthetic process"/>
    <property type="evidence" value="ECO:0007669"/>
    <property type="project" value="UniProtKB-UniRule"/>
</dbReference>
<dbReference type="HAMAP" id="MF_01665">
    <property type="entry name" value="HemeA_synth_type2"/>
    <property type="match status" value="1"/>
</dbReference>
<dbReference type="InterPro" id="IPR003780">
    <property type="entry name" value="COX15/CtaA_fam"/>
</dbReference>
<dbReference type="InterPro" id="IPR023754">
    <property type="entry name" value="HemeA_Synthase_type2"/>
</dbReference>
<dbReference type="PANTHER" id="PTHR23289">
    <property type="entry name" value="CYTOCHROME C OXIDASE ASSEMBLY PROTEIN COX15"/>
    <property type="match status" value="1"/>
</dbReference>
<dbReference type="PANTHER" id="PTHR23289:SF2">
    <property type="entry name" value="CYTOCHROME C OXIDASE ASSEMBLY PROTEIN COX15 HOMOLOG"/>
    <property type="match status" value="1"/>
</dbReference>
<dbReference type="Pfam" id="PF02628">
    <property type="entry name" value="COX15-CtaA"/>
    <property type="match status" value="1"/>
</dbReference>
<proteinExistence type="inferred from homology"/>
<gene>
    <name evidence="1" type="primary">ctaA</name>
    <name type="ordered locus">Mext_1607</name>
</gene>
<organism>
    <name type="scientific">Methylorubrum extorquens (strain PA1)</name>
    <name type="common">Methylobacterium extorquens</name>
    <dbReference type="NCBI Taxonomy" id="419610"/>
    <lineage>
        <taxon>Bacteria</taxon>
        <taxon>Pseudomonadati</taxon>
        <taxon>Pseudomonadota</taxon>
        <taxon>Alphaproteobacteria</taxon>
        <taxon>Hyphomicrobiales</taxon>
        <taxon>Methylobacteriaceae</taxon>
        <taxon>Methylorubrum</taxon>
    </lineage>
</organism>
<comment type="function">
    <text evidence="1">Catalyzes the conversion of heme O to heme A by two successive hydroxylations of the methyl group at C8. The first hydroxylation forms heme I, the second hydroxylation results in an unstable dihydroxymethyl group, which spontaneously dehydrates, resulting in the formyl group of heme A.</text>
</comment>
<comment type="catalytic activity">
    <reaction evidence="1">
        <text>Fe(II)-heme o + 2 A + H2O = Fe(II)-heme a + 2 AH2</text>
        <dbReference type="Rhea" id="RHEA:63388"/>
        <dbReference type="ChEBI" id="CHEBI:13193"/>
        <dbReference type="ChEBI" id="CHEBI:15377"/>
        <dbReference type="ChEBI" id="CHEBI:17499"/>
        <dbReference type="ChEBI" id="CHEBI:60530"/>
        <dbReference type="ChEBI" id="CHEBI:61715"/>
        <dbReference type="EC" id="1.17.99.9"/>
    </reaction>
    <physiologicalReaction direction="left-to-right" evidence="1">
        <dbReference type="Rhea" id="RHEA:63389"/>
    </physiologicalReaction>
</comment>
<comment type="cofactor">
    <cofactor evidence="1">
        <name>heme b</name>
        <dbReference type="ChEBI" id="CHEBI:60344"/>
    </cofactor>
</comment>
<comment type="pathway">
    <text evidence="1">Porphyrin-containing compound metabolism; heme A biosynthesis; heme A from heme O: step 1/1.</text>
</comment>
<comment type="subunit">
    <text evidence="1">Interacts with CtaB.</text>
</comment>
<comment type="subcellular location">
    <subcellularLocation>
        <location evidence="1">Cell membrane</location>
        <topology evidence="1">Multi-pass membrane protein</topology>
    </subcellularLocation>
</comment>
<comment type="similarity">
    <text evidence="1">Belongs to the COX15/CtaA family. Type 2 subfamily.</text>
</comment>
<evidence type="ECO:0000255" key="1">
    <source>
        <dbReference type="HAMAP-Rule" id="MF_01665"/>
    </source>
</evidence>
<name>CTAA_METEP</name>
<feature type="chain" id="PRO_0000349044" description="Heme A synthase">
    <location>
        <begin position="1"/>
        <end position="382"/>
    </location>
</feature>
<feature type="transmembrane region" description="Helical" evidence="1">
    <location>
        <begin position="25"/>
        <end position="45"/>
    </location>
</feature>
<feature type="transmembrane region" description="Helical" evidence="1">
    <location>
        <begin position="112"/>
        <end position="132"/>
    </location>
</feature>
<feature type="transmembrane region" description="Helical" evidence="1">
    <location>
        <begin position="138"/>
        <end position="158"/>
    </location>
</feature>
<feature type="transmembrane region" description="Helical" evidence="1">
    <location>
        <begin position="176"/>
        <end position="196"/>
    </location>
</feature>
<feature type="transmembrane region" description="Helical" evidence="1">
    <location>
        <begin position="211"/>
        <end position="231"/>
    </location>
</feature>
<feature type="transmembrane region" description="Helical" evidence="1">
    <location>
        <begin position="270"/>
        <end position="290"/>
    </location>
</feature>
<feature type="transmembrane region" description="Helical" evidence="1">
    <location>
        <begin position="303"/>
        <end position="323"/>
    </location>
</feature>
<feature type="transmembrane region" description="Helical" evidence="1">
    <location>
        <begin position="327"/>
        <end position="347"/>
    </location>
</feature>
<feature type="binding site" description="axial binding residue" evidence="1">
    <location>
        <position position="277"/>
    </location>
    <ligand>
        <name>heme</name>
        <dbReference type="ChEBI" id="CHEBI:30413"/>
    </ligand>
    <ligandPart>
        <name>Fe</name>
        <dbReference type="ChEBI" id="CHEBI:18248"/>
    </ligandPart>
</feature>
<feature type="binding site" description="axial binding residue" evidence="1">
    <location>
        <position position="338"/>
    </location>
    <ligand>
        <name>heme</name>
        <dbReference type="ChEBI" id="CHEBI:30413"/>
    </ligand>
    <ligandPart>
        <name>Fe</name>
        <dbReference type="ChEBI" id="CHEBI:18248"/>
    </ligandPart>
</feature>